<comment type="function">
    <text evidence="1 4">Mono-ADP-ribosyltransferase that mediates mono-ADP-ribosylation of target proteins (By similarity). Plays a role in nuclear envelope stability and nuclear remodeling during spermiogenesis (PubMed:25673562). Inhibits the type I interferon activated signaling pathway (By similarity). Mechanistically, mono-ADP-ribosylates beta-TrCP/BTRC to promote IFNAR1 ubiquitination and protect BTRC from ubiquitin-proteasome degradation (By similarity).</text>
</comment>
<comment type="catalytic activity">
    <reaction evidence="1">
        <text>L-aspartyl-[protein] + NAD(+) = 4-O-(ADP-D-ribosyl)-L-aspartyl-[protein] + nicotinamide</text>
        <dbReference type="Rhea" id="RHEA:54424"/>
        <dbReference type="Rhea" id="RHEA-COMP:9867"/>
        <dbReference type="Rhea" id="RHEA-COMP:13832"/>
        <dbReference type="ChEBI" id="CHEBI:17154"/>
        <dbReference type="ChEBI" id="CHEBI:29961"/>
        <dbReference type="ChEBI" id="CHEBI:57540"/>
        <dbReference type="ChEBI" id="CHEBI:138102"/>
    </reaction>
</comment>
<comment type="catalytic activity">
    <reaction evidence="1">
        <text>L-cysteinyl-[protein] + NAD(+) = S-(ADP-D-ribosyl)-L-cysteinyl-[protein] + nicotinamide + H(+)</text>
        <dbReference type="Rhea" id="RHEA:56612"/>
        <dbReference type="Rhea" id="RHEA-COMP:10131"/>
        <dbReference type="Rhea" id="RHEA-COMP:14624"/>
        <dbReference type="ChEBI" id="CHEBI:15378"/>
        <dbReference type="ChEBI" id="CHEBI:17154"/>
        <dbReference type="ChEBI" id="CHEBI:29950"/>
        <dbReference type="ChEBI" id="CHEBI:57540"/>
        <dbReference type="ChEBI" id="CHEBI:140607"/>
    </reaction>
</comment>
<comment type="catalytic activity">
    <reaction evidence="1">
        <text>L-glutamyl-[protein] + NAD(+) = 5-O-(ADP-D-ribosyl)-L-glutamyl-[protein] + nicotinamide</text>
        <dbReference type="Rhea" id="RHEA:58224"/>
        <dbReference type="Rhea" id="RHEA-COMP:10208"/>
        <dbReference type="Rhea" id="RHEA-COMP:15089"/>
        <dbReference type="ChEBI" id="CHEBI:17154"/>
        <dbReference type="ChEBI" id="CHEBI:29973"/>
        <dbReference type="ChEBI" id="CHEBI:57540"/>
        <dbReference type="ChEBI" id="CHEBI:142540"/>
    </reaction>
</comment>
<comment type="catalytic activity">
    <reaction evidence="1">
        <text>L-lysyl-[protein] + NAD(+) = N(6)-(ADP-D-ribosyl)-L-lysyl-[protein] + nicotinamide + H(+)</text>
        <dbReference type="Rhea" id="RHEA:58220"/>
        <dbReference type="Rhea" id="RHEA-COMP:9752"/>
        <dbReference type="Rhea" id="RHEA-COMP:15088"/>
        <dbReference type="ChEBI" id="CHEBI:15378"/>
        <dbReference type="ChEBI" id="CHEBI:17154"/>
        <dbReference type="ChEBI" id="CHEBI:29969"/>
        <dbReference type="ChEBI" id="CHEBI:57540"/>
        <dbReference type="ChEBI" id="CHEBI:142515"/>
    </reaction>
</comment>
<comment type="subcellular location">
    <subcellularLocation>
        <location evidence="1">Nucleus</location>
        <location evidence="1">Nuclear pore complex</location>
    </subcellularLocation>
    <text evidence="1">Colocalizes with NUP153 at nuclear pores.</text>
</comment>
<comment type="alternative products">
    <event type="alternative splicing"/>
    <isoform>
        <id>Q8CFF0-1</id>
        <name>1</name>
        <sequence type="displayed"/>
    </isoform>
    <isoform>
        <id>Q8CFF0-2</id>
        <name>2</name>
        <sequence type="described" ref="VSP_022557"/>
    </isoform>
    <isoform>
        <id>Q8CFF0-3</id>
        <name>3</name>
        <sequence type="described" ref="VSP_022558"/>
    </isoform>
</comment>
<comment type="tissue specificity">
    <text evidence="4">Predominantly expressed in testis, preferentially in postmeiotic germ cells. Also detectable in other tissues, including liver, lung, spleen, thymus and brain.</text>
</comment>
<comment type="developmental stage">
    <text evidence="4">Undetectable in testis until postnatal day 18. Sharply up-regulated from postnatal days 18 to 21. This timeframe corresponds to the appearance of the first spermatids of the first wave of spermatogenesis just before initiation of elongation. Remains elevated in adult animals.</text>
</comment>
<comment type="PTM">
    <text evidence="1">Auto-mono-ADP-ribosylated.</text>
</comment>
<comment type="disruption phenotype">
    <text evidence="4">Knockout mice are viable and are born in normal Mendelian ratios. Knockout males, but not females, exhibit a striking fertility defect, with the majority of males being sterile and a minority producing infrequent and small litters. Sperm from mutant mice exhibits mild to severe teratozoospermia, with structural defects in elongating spermatid nuclear envelope and chromatin detachment associated with abnormal nuclear shaping.</text>
</comment>
<comment type="similarity">
    <text evidence="6">Belongs to the ARTD/PARP family.</text>
</comment>
<reference key="1">
    <citation type="journal article" date="2005" name="Science">
        <title>The transcriptional landscape of the mammalian genome.</title>
        <authorList>
            <person name="Carninci P."/>
            <person name="Kasukawa T."/>
            <person name="Katayama S."/>
            <person name="Gough J."/>
            <person name="Frith M.C."/>
            <person name="Maeda N."/>
            <person name="Oyama R."/>
            <person name="Ravasi T."/>
            <person name="Lenhard B."/>
            <person name="Wells C."/>
            <person name="Kodzius R."/>
            <person name="Shimokawa K."/>
            <person name="Bajic V.B."/>
            <person name="Brenner S.E."/>
            <person name="Batalov S."/>
            <person name="Forrest A.R."/>
            <person name="Zavolan M."/>
            <person name="Davis M.J."/>
            <person name="Wilming L.G."/>
            <person name="Aidinis V."/>
            <person name="Allen J.E."/>
            <person name="Ambesi-Impiombato A."/>
            <person name="Apweiler R."/>
            <person name="Aturaliya R.N."/>
            <person name="Bailey T.L."/>
            <person name="Bansal M."/>
            <person name="Baxter L."/>
            <person name="Beisel K.W."/>
            <person name="Bersano T."/>
            <person name="Bono H."/>
            <person name="Chalk A.M."/>
            <person name="Chiu K.P."/>
            <person name="Choudhary V."/>
            <person name="Christoffels A."/>
            <person name="Clutterbuck D.R."/>
            <person name="Crowe M.L."/>
            <person name="Dalla E."/>
            <person name="Dalrymple B.P."/>
            <person name="de Bono B."/>
            <person name="Della Gatta G."/>
            <person name="di Bernardo D."/>
            <person name="Down T."/>
            <person name="Engstrom P."/>
            <person name="Fagiolini M."/>
            <person name="Faulkner G."/>
            <person name="Fletcher C.F."/>
            <person name="Fukushima T."/>
            <person name="Furuno M."/>
            <person name="Futaki S."/>
            <person name="Gariboldi M."/>
            <person name="Georgii-Hemming P."/>
            <person name="Gingeras T.R."/>
            <person name="Gojobori T."/>
            <person name="Green R.E."/>
            <person name="Gustincich S."/>
            <person name="Harbers M."/>
            <person name="Hayashi Y."/>
            <person name="Hensch T.K."/>
            <person name="Hirokawa N."/>
            <person name="Hill D."/>
            <person name="Huminiecki L."/>
            <person name="Iacono M."/>
            <person name="Ikeo K."/>
            <person name="Iwama A."/>
            <person name="Ishikawa T."/>
            <person name="Jakt M."/>
            <person name="Kanapin A."/>
            <person name="Katoh M."/>
            <person name="Kawasawa Y."/>
            <person name="Kelso J."/>
            <person name="Kitamura H."/>
            <person name="Kitano H."/>
            <person name="Kollias G."/>
            <person name="Krishnan S.P."/>
            <person name="Kruger A."/>
            <person name="Kummerfeld S.K."/>
            <person name="Kurochkin I.V."/>
            <person name="Lareau L.F."/>
            <person name="Lazarevic D."/>
            <person name="Lipovich L."/>
            <person name="Liu J."/>
            <person name="Liuni S."/>
            <person name="McWilliam S."/>
            <person name="Madan Babu M."/>
            <person name="Madera M."/>
            <person name="Marchionni L."/>
            <person name="Matsuda H."/>
            <person name="Matsuzawa S."/>
            <person name="Miki H."/>
            <person name="Mignone F."/>
            <person name="Miyake S."/>
            <person name="Morris K."/>
            <person name="Mottagui-Tabar S."/>
            <person name="Mulder N."/>
            <person name="Nakano N."/>
            <person name="Nakauchi H."/>
            <person name="Ng P."/>
            <person name="Nilsson R."/>
            <person name="Nishiguchi S."/>
            <person name="Nishikawa S."/>
            <person name="Nori F."/>
            <person name="Ohara O."/>
            <person name="Okazaki Y."/>
            <person name="Orlando V."/>
            <person name="Pang K.C."/>
            <person name="Pavan W.J."/>
            <person name="Pavesi G."/>
            <person name="Pesole G."/>
            <person name="Petrovsky N."/>
            <person name="Piazza S."/>
            <person name="Reed J."/>
            <person name="Reid J.F."/>
            <person name="Ring B.Z."/>
            <person name="Ringwald M."/>
            <person name="Rost B."/>
            <person name="Ruan Y."/>
            <person name="Salzberg S.L."/>
            <person name="Sandelin A."/>
            <person name="Schneider C."/>
            <person name="Schoenbach C."/>
            <person name="Sekiguchi K."/>
            <person name="Semple C.A."/>
            <person name="Seno S."/>
            <person name="Sessa L."/>
            <person name="Sheng Y."/>
            <person name="Shibata Y."/>
            <person name="Shimada H."/>
            <person name="Shimada K."/>
            <person name="Silva D."/>
            <person name="Sinclair B."/>
            <person name="Sperling S."/>
            <person name="Stupka E."/>
            <person name="Sugiura K."/>
            <person name="Sultana R."/>
            <person name="Takenaka Y."/>
            <person name="Taki K."/>
            <person name="Tammoja K."/>
            <person name="Tan S.L."/>
            <person name="Tang S."/>
            <person name="Taylor M.S."/>
            <person name="Tegner J."/>
            <person name="Teichmann S.A."/>
            <person name="Ueda H.R."/>
            <person name="van Nimwegen E."/>
            <person name="Verardo R."/>
            <person name="Wei C.L."/>
            <person name="Yagi K."/>
            <person name="Yamanishi H."/>
            <person name="Zabarovsky E."/>
            <person name="Zhu S."/>
            <person name="Zimmer A."/>
            <person name="Hide W."/>
            <person name="Bult C."/>
            <person name="Grimmond S.M."/>
            <person name="Teasdale R.D."/>
            <person name="Liu E.T."/>
            <person name="Brusic V."/>
            <person name="Quackenbush J."/>
            <person name="Wahlestedt C."/>
            <person name="Mattick J.S."/>
            <person name="Hume D.A."/>
            <person name="Kai C."/>
            <person name="Sasaki D."/>
            <person name="Tomaru Y."/>
            <person name="Fukuda S."/>
            <person name="Kanamori-Katayama M."/>
            <person name="Suzuki M."/>
            <person name="Aoki J."/>
            <person name="Arakawa T."/>
            <person name="Iida J."/>
            <person name="Imamura K."/>
            <person name="Itoh M."/>
            <person name="Kato T."/>
            <person name="Kawaji H."/>
            <person name="Kawagashira N."/>
            <person name="Kawashima T."/>
            <person name="Kojima M."/>
            <person name="Kondo S."/>
            <person name="Konno H."/>
            <person name="Nakano K."/>
            <person name="Ninomiya N."/>
            <person name="Nishio T."/>
            <person name="Okada M."/>
            <person name="Plessy C."/>
            <person name="Shibata K."/>
            <person name="Shiraki T."/>
            <person name="Suzuki S."/>
            <person name="Tagami M."/>
            <person name="Waki K."/>
            <person name="Watahiki A."/>
            <person name="Okamura-Oho Y."/>
            <person name="Suzuki H."/>
            <person name="Kawai J."/>
            <person name="Hayashizaki Y."/>
        </authorList>
    </citation>
    <scope>NUCLEOTIDE SEQUENCE [LARGE SCALE MRNA] (ISOFORMS 2 AND 3)</scope>
    <source>
        <strain>C57BL/6J</strain>
        <tissue>Bone marrow</tissue>
        <tissue>Pituitary</tissue>
    </source>
</reference>
<reference key="2">
    <citation type="journal article" date="2004" name="Genome Res.">
        <title>The status, quality, and expansion of the NIH full-length cDNA project: the Mammalian Gene Collection (MGC).</title>
        <authorList>
            <consortium name="The MGC Project Team"/>
        </authorList>
    </citation>
    <scope>NUCLEOTIDE SEQUENCE [LARGE SCALE MRNA] (ISOFORM 1)</scope>
    <source>
        <tissue>Mammary tumor</tissue>
    </source>
</reference>
<reference key="3">
    <citation type="journal article" date="2015" name="Biol. Reprod.">
        <title>Spermatid head elongation with normal nuclear shaping requires ADP-ribosyltransferase PARP11 (ARTD11) in mice.</title>
        <authorList>
            <person name="Meyer-Ficca M.L."/>
            <person name="Ihara M."/>
            <person name="Bader J.J."/>
            <person name="Leu N.A."/>
            <person name="Beneke S."/>
            <person name="Meyer R.G."/>
        </authorList>
    </citation>
    <scope>FUNCTION</scope>
    <scope>DISRUPTION PHENOTYPE</scope>
    <scope>TISSUE SPECIFICITY</scope>
    <scope>DEVELOPMENTAL STAGE</scope>
</reference>
<gene>
    <name evidence="7" type="primary">Parp11</name>
</gene>
<feature type="chain" id="PRO_0000273420" description="Protein mono-ADP-ribosyltransferase PARP11">
    <location>
        <begin position="1"/>
        <end position="331"/>
    </location>
</feature>
<feature type="domain" description="WWE" evidence="2">
    <location>
        <begin position="15"/>
        <end position="99"/>
    </location>
</feature>
<feature type="domain" description="PARP catalytic" evidence="3">
    <location>
        <begin position="116"/>
        <end position="331"/>
    </location>
</feature>
<feature type="modified residue" description="N6-(ADP-ribosyl)lysine" evidence="1">
    <location>
        <position position="11"/>
    </location>
</feature>
<feature type="modified residue" description="ADP-ribosylcysteine" evidence="1">
    <location>
        <position position="49"/>
    </location>
</feature>
<feature type="modified residue" description="ADP-ribosylcysteine" evidence="1">
    <location>
        <position position="65"/>
    </location>
</feature>
<feature type="modified residue" description="ADP-ribosyl aspartic acid" evidence="1">
    <location>
        <position position="80"/>
    </location>
</feature>
<feature type="splice variant" id="VSP_022557" description="In isoform 2." evidence="5">
    <location>
        <begin position="1"/>
        <end position="83"/>
    </location>
</feature>
<feature type="splice variant" id="VSP_022558" description="In isoform 3." evidence="5">
    <location>
        <begin position="177"/>
        <end position="331"/>
    </location>
</feature>
<protein>
    <recommendedName>
        <fullName evidence="6">Protein mono-ADP-ribosyltransferase PARP11</fullName>
        <ecNumber evidence="1">2.4.2.-</ecNumber>
    </recommendedName>
    <alternativeName>
        <fullName>ADP-ribosyltransferase diphtheria toxin-like 11</fullName>
        <shortName>ARTD11</shortName>
    </alternativeName>
    <alternativeName>
        <fullName>Poly [ADP-ribose] polymerase 11</fullName>
        <shortName>PARP-11</shortName>
    </alternativeName>
</protein>
<accession>Q8CFF0</accession>
<accession>Q3UAF2</accession>
<accession>Q3UZR7</accession>
<organism>
    <name type="scientific">Mus musculus</name>
    <name type="common">Mouse</name>
    <dbReference type="NCBI Taxonomy" id="10090"/>
    <lineage>
        <taxon>Eukaryota</taxon>
        <taxon>Metazoa</taxon>
        <taxon>Chordata</taxon>
        <taxon>Craniata</taxon>
        <taxon>Vertebrata</taxon>
        <taxon>Euteleostomi</taxon>
        <taxon>Mammalia</taxon>
        <taxon>Eutheria</taxon>
        <taxon>Euarchontoglires</taxon>
        <taxon>Glires</taxon>
        <taxon>Rodentia</taxon>
        <taxon>Myomorpha</taxon>
        <taxon>Muroidea</taxon>
        <taxon>Muridae</taxon>
        <taxon>Murinae</taxon>
        <taxon>Mus</taxon>
        <taxon>Mus</taxon>
    </lineage>
</organism>
<name>PAR11_MOUSE</name>
<evidence type="ECO:0000250" key="1">
    <source>
        <dbReference type="UniProtKB" id="Q9NR21"/>
    </source>
</evidence>
<evidence type="ECO:0000255" key="2">
    <source>
        <dbReference type="PROSITE-ProRule" id="PRU00248"/>
    </source>
</evidence>
<evidence type="ECO:0000255" key="3">
    <source>
        <dbReference type="PROSITE-ProRule" id="PRU00397"/>
    </source>
</evidence>
<evidence type="ECO:0000269" key="4">
    <source>
    </source>
</evidence>
<evidence type="ECO:0000303" key="5">
    <source>
    </source>
</evidence>
<evidence type="ECO:0000305" key="6"/>
<evidence type="ECO:0000312" key="7">
    <source>
        <dbReference type="MGI" id="MGI:2141505"/>
    </source>
</evidence>
<proteinExistence type="evidence at transcript level"/>
<dbReference type="EC" id="2.4.2.-" evidence="1"/>
<dbReference type="EMBL" id="AK133697">
    <property type="protein sequence ID" value="BAE21788.1"/>
    <property type="molecule type" value="mRNA"/>
</dbReference>
<dbReference type="EMBL" id="AK151393">
    <property type="protein sequence ID" value="BAE30362.1"/>
    <property type="molecule type" value="mRNA"/>
</dbReference>
<dbReference type="EMBL" id="BC040269">
    <property type="protein sequence ID" value="AAH40269.1"/>
    <property type="molecule type" value="mRNA"/>
</dbReference>
<dbReference type="CCDS" id="CCDS20565.1">
    <molecule id="Q8CFF0-1"/>
</dbReference>
<dbReference type="CCDS" id="CCDS85162.1">
    <molecule id="Q8CFF0-2"/>
</dbReference>
<dbReference type="RefSeq" id="NP_001333441.1">
    <molecule id="Q8CFF0-2"/>
    <property type="nucleotide sequence ID" value="NM_001346512.1"/>
</dbReference>
<dbReference type="RefSeq" id="NP_001333442.1">
    <molecule id="Q8CFF0-2"/>
    <property type="nucleotide sequence ID" value="NM_001346513.1"/>
</dbReference>
<dbReference type="RefSeq" id="NP_852067.1">
    <molecule id="Q8CFF0-1"/>
    <property type="nucleotide sequence ID" value="NM_181402.4"/>
</dbReference>
<dbReference type="RefSeq" id="XP_006505294.1">
    <molecule id="Q8CFF0-1"/>
    <property type="nucleotide sequence ID" value="XM_006505231.4"/>
</dbReference>
<dbReference type="RefSeq" id="XP_006505295.1">
    <molecule id="Q8CFF0-1"/>
    <property type="nucleotide sequence ID" value="XM_006505232.5"/>
</dbReference>
<dbReference type="RefSeq" id="XP_006505296.1">
    <molecule id="Q8CFF0-1"/>
    <property type="nucleotide sequence ID" value="XM_006505233.5"/>
</dbReference>
<dbReference type="SMR" id="Q8CFF0"/>
<dbReference type="FunCoup" id="Q8CFF0">
    <property type="interactions" value="3689"/>
</dbReference>
<dbReference type="STRING" id="10090.ENSMUSP00000036127"/>
<dbReference type="PhosphoSitePlus" id="Q8CFF0"/>
<dbReference type="PaxDb" id="10090-ENSMUSP00000036127"/>
<dbReference type="Antibodypedia" id="10533">
    <property type="antibodies" value="127 antibodies from 28 providers"/>
</dbReference>
<dbReference type="Ensembl" id="ENSMUST00000039680.7">
    <molecule id="Q8CFF0-1"/>
    <property type="protein sequence ID" value="ENSMUSP00000036127.6"/>
    <property type="gene ID" value="ENSMUSG00000037997.13"/>
</dbReference>
<dbReference type="Ensembl" id="ENSMUST00000112191.8">
    <molecule id="Q8CFF0-2"/>
    <property type="protein sequence ID" value="ENSMUSP00000107810.2"/>
    <property type="gene ID" value="ENSMUSG00000037997.13"/>
</dbReference>
<dbReference type="Ensembl" id="ENSMUST00000112193.8">
    <molecule id="Q8CFF0-3"/>
    <property type="protein sequence ID" value="ENSMUSP00000107812.2"/>
    <property type="gene ID" value="ENSMUSG00000037997.13"/>
</dbReference>
<dbReference type="Ensembl" id="ENSMUST00000112195.8">
    <molecule id="Q8CFF0-3"/>
    <property type="protein sequence ID" value="ENSMUSP00000107814.2"/>
    <property type="gene ID" value="ENSMUSG00000037997.13"/>
</dbReference>
<dbReference type="GeneID" id="101187"/>
<dbReference type="KEGG" id="mmu:101187"/>
<dbReference type="UCSC" id="uc009dvw.1">
    <molecule id="Q8CFF0-1"/>
    <property type="organism name" value="mouse"/>
</dbReference>
<dbReference type="UCSC" id="uc009dvz.1">
    <molecule id="Q8CFF0-3"/>
    <property type="organism name" value="mouse"/>
</dbReference>
<dbReference type="AGR" id="MGI:2141505"/>
<dbReference type="CTD" id="57097"/>
<dbReference type="MGI" id="MGI:2141505">
    <property type="gene designation" value="Parp11"/>
</dbReference>
<dbReference type="VEuPathDB" id="HostDB:ENSMUSG00000037997"/>
<dbReference type="eggNOG" id="ENOG502QT2S">
    <property type="taxonomic scope" value="Eukaryota"/>
</dbReference>
<dbReference type="GeneTree" id="ENSGT00940000156857"/>
<dbReference type="HOGENOM" id="CLU_014825_1_0_1"/>
<dbReference type="InParanoid" id="Q8CFF0"/>
<dbReference type="OMA" id="TWNPRIF"/>
<dbReference type="OrthoDB" id="6133115at2759"/>
<dbReference type="PhylomeDB" id="Q8CFF0"/>
<dbReference type="TreeFam" id="TF338389"/>
<dbReference type="BioGRID-ORCS" id="101187">
    <property type="hits" value="0 hits in 80 CRISPR screens"/>
</dbReference>
<dbReference type="PRO" id="PR:Q8CFF0"/>
<dbReference type="Proteomes" id="UP000000589">
    <property type="component" value="Chromosome 6"/>
</dbReference>
<dbReference type="RNAct" id="Q8CFF0">
    <property type="molecule type" value="protein"/>
</dbReference>
<dbReference type="Bgee" id="ENSMUSG00000037997">
    <property type="expression patterns" value="Expressed in embryonic brain and 221 other cell types or tissues"/>
</dbReference>
<dbReference type="ExpressionAtlas" id="Q8CFF0">
    <property type="expression patterns" value="baseline and differential"/>
</dbReference>
<dbReference type="GO" id="GO:0005829">
    <property type="term" value="C:cytosol"/>
    <property type="evidence" value="ECO:0007669"/>
    <property type="project" value="Ensembl"/>
</dbReference>
<dbReference type="GO" id="GO:0016604">
    <property type="term" value="C:nuclear body"/>
    <property type="evidence" value="ECO:0007669"/>
    <property type="project" value="Ensembl"/>
</dbReference>
<dbReference type="GO" id="GO:0005635">
    <property type="term" value="C:nuclear envelope"/>
    <property type="evidence" value="ECO:0000266"/>
    <property type="project" value="MGI"/>
</dbReference>
<dbReference type="GO" id="GO:0005643">
    <property type="term" value="C:nuclear pore"/>
    <property type="evidence" value="ECO:0000266"/>
    <property type="project" value="MGI"/>
</dbReference>
<dbReference type="GO" id="GO:0003950">
    <property type="term" value="F:NAD+ poly-ADP-ribosyltransferase activity"/>
    <property type="evidence" value="ECO:0000266"/>
    <property type="project" value="MGI"/>
</dbReference>
<dbReference type="GO" id="GO:1990404">
    <property type="term" value="F:NAD+-protein mono-ADP-ribosyltransferase activity"/>
    <property type="evidence" value="ECO:0000250"/>
    <property type="project" value="UniProtKB"/>
</dbReference>
<dbReference type="GO" id="GO:0140806">
    <property type="term" value="F:NAD+-protein-aspartate ADP-ribosyltransferase activity"/>
    <property type="evidence" value="ECO:0007669"/>
    <property type="project" value="RHEA"/>
</dbReference>
<dbReference type="GO" id="GO:0140803">
    <property type="term" value="F:NAD+-protein-cysteine ADP-ribosyltransferase activity"/>
    <property type="evidence" value="ECO:0007669"/>
    <property type="project" value="RHEA"/>
</dbReference>
<dbReference type="GO" id="GO:0140807">
    <property type="term" value="F:NAD+-protein-glutamate ADP-ribosyltransferase activity"/>
    <property type="evidence" value="ECO:0007669"/>
    <property type="project" value="RHEA"/>
</dbReference>
<dbReference type="GO" id="GO:0140804">
    <property type="term" value="F:NAD+-protein-lysine ADP-ribosyltransferase activity"/>
    <property type="evidence" value="ECO:0007669"/>
    <property type="project" value="RHEA"/>
</dbReference>
<dbReference type="GO" id="GO:0016779">
    <property type="term" value="F:nucleotidyltransferase activity"/>
    <property type="evidence" value="ECO:0007669"/>
    <property type="project" value="UniProtKB-KW"/>
</dbReference>
<dbReference type="GO" id="GO:0030154">
    <property type="term" value="P:cell differentiation"/>
    <property type="evidence" value="ECO:0007669"/>
    <property type="project" value="UniProtKB-KW"/>
</dbReference>
<dbReference type="GO" id="GO:0051028">
    <property type="term" value="P:mRNA transport"/>
    <property type="evidence" value="ECO:0007669"/>
    <property type="project" value="UniProtKB-KW"/>
</dbReference>
<dbReference type="GO" id="GO:0006998">
    <property type="term" value="P:nuclear envelope organization"/>
    <property type="evidence" value="ECO:0000315"/>
    <property type="project" value="MGI"/>
</dbReference>
<dbReference type="GO" id="GO:0070213">
    <property type="term" value="P:protein auto-ADP-ribosylation"/>
    <property type="evidence" value="ECO:0000250"/>
    <property type="project" value="UniProtKB"/>
</dbReference>
<dbReference type="GO" id="GO:0015031">
    <property type="term" value="P:protein transport"/>
    <property type="evidence" value="ECO:0007669"/>
    <property type="project" value="UniProtKB-KW"/>
</dbReference>
<dbReference type="GO" id="GO:0007283">
    <property type="term" value="P:spermatogenesis"/>
    <property type="evidence" value="ECO:0007669"/>
    <property type="project" value="UniProtKB-KW"/>
</dbReference>
<dbReference type="CDD" id="cd01439">
    <property type="entry name" value="TCCD_inducible_PARP_like"/>
    <property type="match status" value="1"/>
</dbReference>
<dbReference type="FunFam" id="3.30.720.50:FF:000006">
    <property type="entry name" value="Poly [ADP-ribose] polymerase"/>
    <property type="match status" value="1"/>
</dbReference>
<dbReference type="FunFam" id="3.90.228.10:FF:000003">
    <property type="entry name" value="TCDD-inducible poly [ADP-ribose] polymerase"/>
    <property type="match status" value="1"/>
</dbReference>
<dbReference type="Gene3D" id="3.30.720.50">
    <property type="match status" value="1"/>
</dbReference>
<dbReference type="Gene3D" id="3.90.228.10">
    <property type="match status" value="1"/>
</dbReference>
<dbReference type="InterPro" id="IPR051712">
    <property type="entry name" value="ARTD-AVP"/>
</dbReference>
<dbReference type="InterPro" id="IPR012317">
    <property type="entry name" value="Poly(ADP-ribose)pol_cat_dom"/>
</dbReference>
<dbReference type="InterPro" id="IPR004170">
    <property type="entry name" value="WWE_dom"/>
</dbReference>
<dbReference type="InterPro" id="IPR037197">
    <property type="entry name" value="WWE_dom_sf"/>
</dbReference>
<dbReference type="PANTHER" id="PTHR45740">
    <property type="entry name" value="POLY [ADP-RIBOSE] POLYMERASE"/>
    <property type="match status" value="1"/>
</dbReference>
<dbReference type="PANTHER" id="PTHR45740:SF4">
    <property type="entry name" value="PROTEIN MONO-ADP-RIBOSYLTRANSFERASE PARP11"/>
    <property type="match status" value="1"/>
</dbReference>
<dbReference type="Pfam" id="PF00644">
    <property type="entry name" value="PARP"/>
    <property type="match status" value="1"/>
</dbReference>
<dbReference type="Pfam" id="PF02825">
    <property type="entry name" value="WWE"/>
    <property type="match status" value="1"/>
</dbReference>
<dbReference type="SUPFAM" id="SSF56399">
    <property type="entry name" value="ADP-ribosylation"/>
    <property type="match status" value="1"/>
</dbReference>
<dbReference type="SUPFAM" id="SSF117839">
    <property type="entry name" value="WWE domain"/>
    <property type="match status" value="1"/>
</dbReference>
<dbReference type="PROSITE" id="PS51059">
    <property type="entry name" value="PARP_CATALYTIC"/>
    <property type="match status" value="1"/>
</dbReference>
<dbReference type="PROSITE" id="PS50918">
    <property type="entry name" value="WWE"/>
    <property type="match status" value="1"/>
</dbReference>
<sequence length="331" mass="38737">MFHKTEEFFPKKTDSDVDDMDTSDTQWGWFYLAECGKWHMFQPDTNIQCSVSSEDIEKSFKTNPCGSISFTTSKFSYKIDFAEMKQMNLVTGKQRLIKRAPFSISAFSYICENEAIPMPTHWENVNPDVPYQLVSLQNQTHEYNEVASLFGKTMDRNRIKRIQRIQNLDLWEFFCRKKAQLKKKRGVPQINEQMLFHGTSSEFVEAICIHNFDWRINGVHGAVFGKGTYFARDAAYSSRFCKDDIKHGNTFQIHGVSLQQRHLFRTYKSMFLARVLIGDYINGDSKYMRPPSKDGSYVNLYDSCVDDTWNPKIFVVFDANQIYPEYLIDFH</sequence>
<keyword id="KW-0013">ADP-ribosylation</keyword>
<keyword id="KW-0025">Alternative splicing</keyword>
<keyword id="KW-0221">Differentiation</keyword>
<keyword id="KW-0328">Glycosyltransferase</keyword>
<keyword id="KW-0509">mRNA transport</keyword>
<keyword id="KW-0520">NAD</keyword>
<keyword id="KW-0906">Nuclear pore complex</keyword>
<keyword id="KW-0548">Nucleotidyltransferase</keyword>
<keyword id="KW-0539">Nucleus</keyword>
<keyword id="KW-0653">Protein transport</keyword>
<keyword id="KW-1185">Reference proteome</keyword>
<keyword id="KW-0744">Spermatogenesis</keyword>
<keyword id="KW-0808">Transferase</keyword>
<keyword id="KW-0811">Translocation</keyword>
<keyword id="KW-0813">Transport</keyword>